<accession>Q5EA80</accession>
<comment type="function">
    <text evidence="1">Catalyzes the transfer of a geranylgeranyl moiety from geranylgeranyl diphosphate to both cysteines of Rab proteins with the C-terminal sequence -XXCC, -XCXC and -CCXX, such as RAB1A, RAB3A, RAB5A and RAB7A.</text>
</comment>
<comment type="catalytic activity">
    <reaction>
        <text>geranylgeranyl diphosphate + L-cysteinyl-[protein] = S-geranylgeranyl-L-cysteinyl-[protein] + diphosphate</text>
        <dbReference type="Rhea" id="RHEA:21240"/>
        <dbReference type="Rhea" id="RHEA-COMP:10131"/>
        <dbReference type="Rhea" id="RHEA-COMP:11537"/>
        <dbReference type="ChEBI" id="CHEBI:29950"/>
        <dbReference type="ChEBI" id="CHEBI:33019"/>
        <dbReference type="ChEBI" id="CHEBI:57533"/>
        <dbReference type="ChEBI" id="CHEBI:86021"/>
        <dbReference type="EC" id="2.5.1.60"/>
    </reaction>
</comment>
<comment type="activity regulation">
    <text evidence="1">The enzymatic reaction requires the aid of a Rab escort protein (also called component A), such as CHM.</text>
</comment>
<comment type="subunit">
    <text evidence="2">Heterotrimer composed of RABGGTA, RABGGTB and CHM; within this trimer, RABGGTA and RABGGTB form the catalytic component B, while CHM (component A) mediates peptide substrate binding. The Rab GGTase dimer (RGGT) interacts with CHM (component A) prior to Rab protein binding; the association is stabilized by geranylgeranyl pyrophosphate (GGpp). The CHM:RGGT:Rab complex is destabilized by GGpp. Interacts with non-phosphorylated form of RAB8A; phosphorylation of RAB8A at 'Thr-72' disrupts this interaction.</text>
</comment>
<comment type="similarity">
    <text evidence="4">Belongs to the protein prenyltransferase subunit alpha family.</text>
</comment>
<name>PGTA_BOVIN</name>
<keyword id="KW-0433">Leucine-rich repeat</keyword>
<keyword id="KW-0597">Phosphoprotein</keyword>
<keyword id="KW-0637">Prenyltransferase</keyword>
<keyword id="KW-1185">Reference proteome</keyword>
<keyword id="KW-0677">Repeat</keyword>
<keyword id="KW-0808">Transferase</keyword>
<organism>
    <name type="scientific">Bos taurus</name>
    <name type="common">Bovine</name>
    <dbReference type="NCBI Taxonomy" id="9913"/>
    <lineage>
        <taxon>Eukaryota</taxon>
        <taxon>Metazoa</taxon>
        <taxon>Chordata</taxon>
        <taxon>Craniata</taxon>
        <taxon>Vertebrata</taxon>
        <taxon>Euteleostomi</taxon>
        <taxon>Mammalia</taxon>
        <taxon>Eutheria</taxon>
        <taxon>Laurasiatheria</taxon>
        <taxon>Artiodactyla</taxon>
        <taxon>Ruminantia</taxon>
        <taxon>Pecora</taxon>
        <taxon>Bovidae</taxon>
        <taxon>Bovinae</taxon>
        <taxon>Bos</taxon>
    </lineage>
</organism>
<dbReference type="EC" id="2.5.1.60"/>
<dbReference type="EMBL" id="BT020689">
    <property type="protein sequence ID" value="AAX08706.1"/>
    <property type="molecule type" value="mRNA"/>
</dbReference>
<dbReference type="EMBL" id="BT020760">
    <property type="protein sequence ID" value="AAX08777.1"/>
    <property type="molecule type" value="mRNA"/>
</dbReference>
<dbReference type="EMBL" id="BT020911">
    <property type="protein sequence ID" value="AAX08928.1"/>
    <property type="molecule type" value="mRNA"/>
</dbReference>
<dbReference type="EMBL" id="BC111228">
    <property type="protein sequence ID" value="AAI11229.1"/>
    <property type="molecule type" value="mRNA"/>
</dbReference>
<dbReference type="EMBL" id="BT020650">
    <property type="protein sequence ID" value="AAX08667.1"/>
    <property type="molecule type" value="mRNA"/>
</dbReference>
<dbReference type="RefSeq" id="NP_001015614.1">
    <property type="nucleotide sequence ID" value="NM_001015614.1"/>
</dbReference>
<dbReference type="SMR" id="Q5EA80"/>
<dbReference type="FunCoup" id="Q5EA80">
    <property type="interactions" value="2383"/>
</dbReference>
<dbReference type="STRING" id="9913.ENSBTAP00000025020"/>
<dbReference type="PaxDb" id="9913-ENSBTAP00000025020"/>
<dbReference type="GeneID" id="516619"/>
<dbReference type="KEGG" id="bta:516619"/>
<dbReference type="CTD" id="5875"/>
<dbReference type="VEuPathDB" id="HostDB:ENSBTAG00000018796"/>
<dbReference type="eggNOG" id="KOG0529">
    <property type="taxonomic scope" value="Eukaryota"/>
</dbReference>
<dbReference type="HOGENOM" id="CLU_031996_3_2_1"/>
<dbReference type="InParanoid" id="Q5EA80"/>
<dbReference type="OMA" id="CAWHHRC"/>
<dbReference type="OrthoDB" id="1658at2759"/>
<dbReference type="TreeFam" id="TF315057"/>
<dbReference type="Reactome" id="R-BTA-6803205">
    <property type="pathway name" value="TP53 regulates transcription of several additional cell death genes whose specific roles in p53-dependent apoptosis remain uncertain"/>
</dbReference>
<dbReference type="Reactome" id="R-BTA-8873719">
    <property type="pathway name" value="RAB geranylgeranylation"/>
</dbReference>
<dbReference type="Proteomes" id="UP000009136">
    <property type="component" value="Chromosome 10"/>
</dbReference>
<dbReference type="Bgee" id="ENSBTAG00000018796">
    <property type="expression patterns" value="Expressed in infraspinatus muscle and 105 other cell types or tissues"/>
</dbReference>
<dbReference type="GO" id="GO:0005737">
    <property type="term" value="C:cytoplasm"/>
    <property type="evidence" value="ECO:0000318"/>
    <property type="project" value="GO_Central"/>
</dbReference>
<dbReference type="GO" id="GO:0005968">
    <property type="term" value="C:Rab-protein geranylgeranyltransferase complex"/>
    <property type="evidence" value="ECO:0000250"/>
    <property type="project" value="UniProtKB"/>
</dbReference>
<dbReference type="GO" id="GO:0004663">
    <property type="term" value="F:Rab geranylgeranyltransferase activity"/>
    <property type="evidence" value="ECO:0000250"/>
    <property type="project" value="UniProtKB"/>
</dbReference>
<dbReference type="GO" id="GO:0031267">
    <property type="term" value="F:small GTPase binding"/>
    <property type="evidence" value="ECO:0000250"/>
    <property type="project" value="UniProtKB"/>
</dbReference>
<dbReference type="GO" id="GO:0008270">
    <property type="term" value="F:zinc ion binding"/>
    <property type="evidence" value="ECO:0007669"/>
    <property type="project" value="InterPro"/>
</dbReference>
<dbReference type="GO" id="GO:0006888">
    <property type="term" value="P:endoplasmic reticulum to Golgi vesicle-mediated transport"/>
    <property type="evidence" value="ECO:0000318"/>
    <property type="project" value="GO_Central"/>
</dbReference>
<dbReference type="GO" id="GO:0018344">
    <property type="term" value="P:protein geranylgeranylation"/>
    <property type="evidence" value="ECO:0000250"/>
    <property type="project" value="UniProtKB"/>
</dbReference>
<dbReference type="FunFam" id="1.25.40.120:FF:000035">
    <property type="entry name" value="Geranylgeranyl transferase type-2 subunit alpha"/>
    <property type="match status" value="2"/>
</dbReference>
<dbReference type="FunFam" id="2.60.40.1130:FF:000001">
    <property type="entry name" value="Geranylgeranyl transferase type-2 subunit alpha"/>
    <property type="match status" value="1"/>
</dbReference>
<dbReference type="FunFam" id="3.80.10.10:FF:000138">
    <property type="entry name" value="geranylgeranyl transferase type-2 subunit alpha"/>
    <property type="match status" value="1"/>
</dbReference>
<dbReference type="Gene3D" id="1.25.40.120">
    <property type="entry name" value="Protein prenylyltransferase"/>
    <property type="match status" value="1"/>
</dbReference>
<dbReference type="Gene3D" id="2.60.40.1130">
    <property type="entry name" value="Rab geranylgeranyltransferase alpha-subunit, insert domain"/>
    <property type="match status" value="1"/>
</dbReference>
<dbReference type="Gene3D" id="3.80.10.10">
    <property type="entry name" value="Ribonuclease Inhibitor"/>
    <property type="match status" value="1"/>
</dbReference>
<dbReference type="InterPro" id="IPR032675">
    <property type="entry name" value="LRR_dom_sf"/>
</dbReference>
<dbReference type="InterPro" id="IPR002088">
    <property type="entry name" value="Prenyl_trans_a"/>
</dbReference>
<dbReference type="InterPro" id="IPR036254">
    <property type="entry name" value="RabGGT_asu_insert-dom_sf"/>
</dbReference>
<dbReference type="InterPro" id="IPR009087">
    <property type="entry name" value="RabGGT_asu_insert-domain"/>
</dbReference>
<dbReference type="PANTHER" id="PTHR11129:SF2">
    <property type="entry name" value="GERANYLGERANYL TRANSFERASE TYPE-2 SUBUNIT ALPHA"/>
    <property type="match status" value="1"/>
</dbReference>
<dbReference type="PANTHER" id="PTHR11129">
    <property type="entry name" value="PROTEIN FARNESYLTRANSFERASE ALPHA SUBUNIT/RAB GERANYLGERANYL TRANSFERASE ALPHA SUBUNIT"/>
    <property type="match status" value="1"/>
</dbReference>
<dbReference type="Pfam" id="PF14580">
    <property type="entry name" value="LRR_9"/>
    <property type="match status" value="1"/>
</dbReference>
<dbReference type="Pfam" id="PF01239">
    <property type="entry name" value="PPTA"/>
    <property type="match status" value="5"/>
</dbReference>
<dbReference type="Pfam" id="PF07711">
    <property type="entry name" value="RabGGT_insert"/>
    <property type="match status" value="1"/>
</dbReference>
<dbReference type="SUPFAM" id="SSF52075">
    <property type="entry name" value="Outer arm dynein light chain 1"/>
    <property type="match status" value="1"/>
</dbReference>
<dbReference type="SUPFAM" id="SSF48439">
    <property type="entry name" value="Protein prenylyltransferase"/>
    <property type="match status" value="1"/>
</dbReference>
<dbReference type="SUPFAM" id="SSF49594">
    <property type="entry name" value="Rab geranylgeranyltransferase alpha-subunit, insert domain"/>
    <property type="match status" value="1"/>
</dbReference>
<dbReference type="PROSITE" id="PS51147">
    <property type="entry name" value="PFTA"/>
    <property type="match status" value="6"/>
</dbReference>
<evidence type="ECO:0000250" key="1"/>
<evidence type="ECO:0000250" key="2">
    <source>
        <dbReference type="UniProtKB" id="Q92696"/>
    </source>
</evidence>
<evidence type="ECO:0000250" key="3">
    <source>
        <dbReference type="UniProtKB" id="Q9JHK4"/>
    </source>
</evidence>
<evidence type="ECO:0000305" key="4"/>
<reference key="1">
    <citation type="journal article" date="2005" name="BMC Genomics">
        <title>Characterization of 954 bovine full-CDS cDNA sequences.</title>
        <authorList>
            <person name="Harhay G.P."/>
            <person name="Sonstegard T.S."/>
            <person name="Keele J.W."/>
            <person name="Heaton M.P."/>
            <person name="Clawson M.L."/>
            <person name="Snelling W.M."/>
            <person name="Wiedmann R.T."/>
            <person name="Van Tassell C.P."/>
            <person name="Smith T.P.L."/>
        </authorList>
    </citation>
    <scope>NUCLEOTIDE SEQUENCE [LARGE SCALE MRNA]</scope>
</reference>
<reference key="2">
    <citation type="submission" date="2005-12" db="EMBL/GenBank/DDBJ databases">
        <authorList>
            <consortium name="NIH - Mammalian Gene Collection (MGC) project"/>
        </authorList>
    </citation>
    <scope>NUCLEOTIDE SEQUENCE [LARGE SCALE MRNA]</scope>
    <source>
        <strain>Crossbred X Angus</strain>
        <tissue>Liver</tissue>
    </source>
</reference>
<protein>
    <recommendedName>
        <fullName>Geranylgeranyl transferase type-2 subunit alpha</fullName>
        <ecNumber>2.5.1.60</ecNumber>
    </recommendedName>
    <alternativeName>
        <fullName>Geranylgeranyl transferase type II subunit alpha</fullName>
    </alternativeName>
    <alternativeName>
        <fullName>Rab geranyl-geranyltransferase subunit alpha</fullName>
        <shortName>Rab GG transferase alpha</shortName>
        <shortName>Rab GGTase alpha</shortName>
    </alternativeName>
    <alternativeName>
        <fullName>Rab geranylgeranyltransferase subunit alpha</fullName>
    </alternativeName>
</protein>
<proteinExistence type="evidence at transcript level"/>
<sequence>MHGRLKVKTSEEQAEAKRLEREQKLKLYQAATQTVFQKRQAGELDESVLELTSQILGANPDFATLWNCRREVLQQLEVQKSPEELATLVKAELGFLESCLRVNPKSYGTWHHRCWLLSRLPEPNWARELELCARFLEVDERNFHCWDYRRFVAAQAAVPPAEELAFTDSLITRNFSNYSSWHYRSCLLPQLHPQPDSGPQGRLPEDVLLKELELVQNAFFTDPNDQSAWFYHRWLLGRADPQDALRCLHVSRDEACLTVSFSRPLLVGSGMETLLLMVDESPLAVEWRTPEGRNRPSHIWLCDLPATSLNDQLPQHTFRVIWTAGDAQKECVLLKGRQEGWCRDSATDEQLFRCELSVEKSTVLQSELESCKELQELEPENKWCLLTIILLMRALDPLQYEKETLQYFQTLKAVDPMRAAYLDDLRSKFLLENSVLKMEYAEVRVLHLGHKDLTVLCHLEQLLLVTHLDLSHNRLRALPPALAALRCLEVLQANDNAIESLDGVTNLPRLQELILCNNRLQQPAVLQPLTSCPRLTLLNLQGNPLCQAEGSSEHLAELLPSVSSILT</sequence>
<feature type="chain" id="PRO_0000244431" description="Geranylgeranyl transferase type-2 subunit alpha">
    <location>
        <begin position="1"/>
        <end position="567"/>
    </location>
</feature>
<feature type="repeat" description="PFTA 1">
    <location>
        <begin position="44"/>
        <end position="78"/>
    </location>
</feature>
<feature type="repeat" description="PFTA 2">
    <location>
        <begin position="88"/>
        <end position="122"/>
    </location>
</feature>
<feature type="repeat" description="PFTA 3">
    <location>
        <begin position="124"/>
        <end position="158"/>
    </location>
</feature>
<feature type="repeat" description="PFTA 4">
    <location>
        <begin position="159"/>
        <end position="193"/>
    </location>
</feature>
<feature type="repeat" description="PFTA 5">
    <location>
        <begin position="207"/>
        <end position="241"/>
    </location>
</feature>
<feature type="repeat" description="PFTA 6">
    <location>
        <begin position="363"/>
        <end position="397"/>
    </location>
</feature>
<feature type="repeat" description="LRR 1">
    <location>
        <begin position="442"/>
        <end position="463"/>
    </location>
</feature>
<feature type="repeat" description="LRR 2">
    <location>
        <begin position="464"/>
        <end position="486"/>
    </location>
</feature>
<feature type="repeat" description="LRR 3">
    <location>
        <begin position="487"/>
        <end position="508"/>
    </location>
</feature>
<feature type="repeat" description="LRR 4">
    <location>
        <begin position="509"/>
        <end position="530"/>
    </location>
</feature>
<feature type="repeat" description="LRR 5">
    <location>
        <begin position="534"/>
        <end position="555"/>
    </location>
</feature>
<feature type="modified residue" description="Phosphoserine" evidence="3">
    <location>
        <position position="98"/>
    </location>
</feature>
<gene>
    <name type="primary">RABGGTA</name>
</gene>